<comment type="function">
    <text evidence="1">Part of a heterotetrameric complex that catalyzes the two-step biosynthesis of anthranilate, an intermediate in the biosynthesis of L-tryptophan. In the first step, the glutamine-binding beta subunit (TrpG) of anthranilate synthase (AS) provides the glutamine amidotransferase activity which generates ammonia as a substrate that, along with chorismate, is used in the second step, catalyzed by the large alpha subunit of AS (TrpE) to produce anthranilate. In the absence of TrpG, TrpE can synthesize anthranilate directly from chorismate and high concentrations of ammonia (By similarity).</text>
</comment>
<comment type="catalytic activity">
    <reaction>
        <text>chorismate + L-glutamine = anthranilate + pyruvate + L-glutamate + H(+)</text>
        <dbReference type="Rhea" id="RHEA:21732"/>
        <dbReference type="ChEBI" id="CHEBI:15361"/>
        <dbReference type="ChEBI" id="CHEBI:15378"/>
        <dbReference type="ChEBI" id="CHEBI:16567"/>
        <dbReference type="ChEBI" id="CHEBI:29748"/>
        <dbReference type="ChEBI" id="CHEBI:29985"/>
        <dbReference type="ChEBI" id="CHEBI:58359"/>
        <dbReference type="EC" id="4.1.3.27"/>
    </reaction>
</comment>
<comment type="cofactor">
    <cofactor evidence="2">
        <name>Mg(2+)</name>
        <dbReference type="ChEBI" id="CHEBI:18420"/>
    </cofactor>
    <text evidence="2">Binds 1 Mg(2+) ion per subunit.</text>
</comment>
<comment type="activity regulation">
    <text evidence="1">Feedback inhibited by tryptophan.</text>
</comment>
<comment type="pathway">
    <text>Amino-acid biosynthesis; L-tryptophan biosynthesis; L-tryptophan from chorismate: step 1/5.</text>
</comment>
<comment type="subunit">
    <text evidence="1">Heterotetramer consisting of two non-identical subunits: a beta subunit (TrpG) and a large alpha subunit (TrpE).</text>
</comment>
<comment type="similarity">
    <text evidence="3">Belongs to the anthranilate synthase component I family.</text>
</comment>
<evidence type="ECO:0000250" key="1"/>
<evidence type="ECO:0000250" key="2">
    <source>
        <dbReference type="UniProtKB" id="P00897"/>
    </source>
</evidence>
<evidence type="ECO:0000305" key="3"/>
<gene>
    <name type="primary">trpE</name>
    <name type="ordered locus">APE_2553.1</name>
</gene>
<protein>
    <recommendedName>
        <fullName>Anthranilate synthase component 1</fullName>
        <shortName>AS</shortName>
        <shortName>ASI</shortName>
        <ecNumber>4.1.3.27</ecNumber>
    </recommendedName>
</protein>
<organism>
    <name type="scientific">Aeropyrum pernix (strain ATCC 700893 / DSM 11879 / JCM 9820 / NBRC 100138 / K1)</name>
    <dbReference type="NCBI Taxonomy" id="272557"/>
    <lineage>
        <taxon>Archaea</taxon>
        <taxon>Thermoproteota</taxon>
        <taxon>Thermoprotei</taxon>
        <taxon>Desulfurococcales</taxon>
        <taxon>Desulfurococcaceae</taxon>
        <taxon>Aeropyrum</taxon>
    </lineage>
</organism>
<proteinExistence type="inferred from homology"/>
<keyword id="KW-0028">Amino-acid biosynthesis</keyword>
<keyword id="KW-0057">Aromatic amino acid biosynthesis</keyword>
<keyword id="KW-0456">Lyase</keyword>
<keyword id="KW-0460">Magnesium</keyword>
<keyword id="KW-0479">Metal-binding</keyword>
<keyword id="KW-1185">Reference proteome</keyword>
<keyword id="KW-0822">Tryptophan biosynthesis</keyword>
<name>TRPE_AERPE</name>
<sequence length="438" mass="48310">MPSPPEPPLHWRDCRLEPILGFPRPRELAKSLEVQGEEWIALLESGGGLQHRSRYSFLAWGRRKSSETDAIRAYEELERLADDKCRALPCRSPTFFLVSYEAVVGEEPWLSRLVGRHEWPGMTAFSPEYVVVYDHAGGRVSVCPGDTPLPAPASRKESFSAEGPTYETSRKGFEAMVADALERIRAGEAFQVVLSRVERYRVWGSLFSAYERLADANPSPYLYYARLGGRVIIGSSPELLVKLEAGRVETHPIAGTRPRGSTPIEDIELEVELLNDEKERAEHVMLVDLARNDITRVSIPGTVQVTSFMDIERYETVMHIVSRVEGVTRPSTTFVEALKALHPAGTVSGAPKPRAMEIIAELEEEARGPYAGAIGVAGSSAGEAAIVLRSAWLLDDGETLEARAGAGIVYDSKPEREYMETVQKLGSLKRALGVDMCG</sequence>
<dbReference type="EC" id="4.1.3.27"/>
<dbReference type="EMBL" id="BA000002">
    <property type="protein sequence ID" value="BAA81570.2"/>
    <property type="molecule type" value="Genomic_DNA"/>
</dbReference>
<dbReference type="PIR" id="B72489">
    <property type="entry name" value="B72489"/>
</dbReference>
<dbReference type="RefSeq" id="WP_010867081.1">
    <property type="nucleotide sequence ID" value="NC_000854.2"/>
</dbReference>
<dbReference type="SMR" id="Q9Y8T0"/>
<dbReference type="STRING" id="272557.APE_2553.1"/>
<dbReference type="EnsemblBacteria" id="BAA81570">
    <property type="protein sequence ID" value="BAA81570"/>
    <property type="gene ID" value="APE_2553.1"/>
</dbReference>
<dbReference type="GeneID" id="1445497"/>
<dbReference type="KEGG" id="ape:APE_2553.1"/>
<dbReference type="PATRIC" id="fig|272557.25.peg.1695"/>
<dbReference type="eggNOG" id="arCOG02014">
    <property type="taxonomic scope" value="Archaea"/>
</dbReference>
<dbReference type="UniPathway" id="UPA00035">
    <property type="reaction ID" value="UER00040"/>
</dbReference>
<dbReference type="Proteomes" id="UP000002518">
    <property type="component" value="Chromosome"/>
</dbReference>
<dbReference type="GO" id="GO:0004049">
    <property type="term" value="F:anthranilate synthase activity"/>
    <property type="evidence" value="ECO:0007669"/>
    <property type="project" value="UniProtKB-EC"/>
</dbReference>
<dbReference type="GO" id="GO:0046872">
    <property type="term" value="F:metal ion binding"/>
    <property type="evidence" value="ECO:0007669"/>
    <property type="project" value="UniProtKB-KW"/>
</dbReference>
<dbReference type="GO" id="GO:0000162">
    <property type="term" value="P:L-tryptophan biosynthetic process"/>
    <property type="evidence" value="ECO:0007669"/>
    <property type="project" value="UniProtKB-UniPathway"/>
</dbReference>
<dbReference type="Gene3D" id="3.60.120.10">
    <property type="entry name" value="Anthranilate synthase"/>
    <property type="match status" value="1"/>
</dbReference>
<dbReference type="InterPro" id="IPR005801">
    <property type="entry name" value="ADC_synthase"/>
</dbReference>
<dbReference type="InterPro" id="IPR019999">
    <property type="entry name" value="Anth_synth_I-like"/>
</dbReference>
<dbReference type="InterPro" id="IPR015890">
    <property type="entry name" value="Chorismate_C"/>
</dbReference>
<dbReference type="PANTHER" id="PTHR11236">
    <property type="entry name" value="AMINOBENZOATE/ANTHRANILATE SYNTHASE"/>
    <property type="match status" value="1"/>
</dbReference>
<dbReference type="PANTHER" id="PTHR11236:SF9">
    <property type="entry name" value="ANTHRANILATE SYNTHASE COMPONENT 1"/>
    <property type="match status" value="1"/>
</dbReference>
<dbReference type="Pfam" id="PF00425">
    <property type="entry name" value="Chorismate_bind"/>
    <property type="match status" value="1"/>
</dbReference>
<dbReference type="PRINTS" id="PR00095">
    <property type="entry name" value="ANTSNTHASEI"/>
</dbReference>
<dbReference type="SUPFAM" id="SSF56322">
    <property type="entry name" value="ADC synthase"/>
    <property type="match status" value="1"/>
</dbReference>
<accession>Q9Y8T0</accession>
<feature type="chain" id="PRO_0000154120" description="Anthranilate synthase component 1">
    <location>
        <begin position="1"/>
        <end position="438"/>
    </location>
</feature>
<feature type="binding site" evidence="2">
    <location>
        <position position="45"/>
    </location>
    <ligand>
        <name>L-tryptophan</name>
        <dbReference type="ChEBI" id="CHEBI:57912"/>
    </ligand>
</feature>
<feature type="binding site" evidence="2">
    <location>
        <begin position="220"/>
        <end position="222"/>
    </location>
    <ligand>
        <name>L-tryptophan</name>
        <dbReference type="ChEBI" id="CHEBI:57912"/>
    </ligand>
</feature>
<feature type="binding site" evidence="2">
    <location>
        <begin position="255"/>
        <end position="256"/>
    </location>
    <ligand>
        <name>chorismate</name>
        <dbReference type="ChEBI" id="CHEBI:29748"/>
    </ligand>
</feature>
<feature type="binding site" evidence="2">
    <location>
        <position position="282"/>
    </location>
    <ligand>
        <name>Mg(2+)</name>
        <dbReference type="ChEBI" id="CHEBI:18420"/>
    </ligand>
</feature>
<feature type="binding site" evidence="2">
    <location>
        <position position="370"/>
    </location>
    <ligand>
        <name>chorismate</name>
        <dbReference type="ChEBI" id="CHEBI:29748"/>
    </ligand>
</feature>
<feature type="binding site" evidence="2">
    <location>
        <position position="389"/>
    </location>
    <ligand>
        <name>chorismate</name>
        <dbReference type="ChEBI" id="CHEBI:29748"/>
    </ligand>
</feature>
<feature type="binding site" evidence="2">
    <location>
        <begin position="405"/>
        <end position="407"/>
    </location>
    <ligand>
        <name>chorismate</name>
        <dbReference type="ChEBI" id="CHEBI:29748"/>
    </ligand>
</feature>
<feature type="binding site" evidence="2">
    <location>
        <position position="407"/>
    </location>
    <ligand>
        <name>chorismate</name>
        <dbReference type="ChEBI" id="CHEBI:29748"/>
    </ligand>
</feature>
<feature type="binding site" evidence="2">
    <location>
        <position position="420"/>
    </location>
    <ligand>
        <name>Mg(2+)</name>
        <dbReference type="ChEBI" id="CHEBI:18420"/>
    </ligand>
</feature>
<reference key="1">
    <citation type="journal article" date="1999" name="DNA Res.">
        <title>Complete genome sequence of an aerobic hyper-thermophilic crenarchaeon, Aeropyrum pernix K1.</title>
        <authorList>
            <person name="Kawarabayasi Y."/>
            <person name="Hino Y."/>
            <person name="Horikawa H."/>
            <person name="Yamazaki S."/>
            <person name="Haikawa Y."/>
            <person name="Jin-no K."/>
            <person name="Takahashi M."/>
            <person name="Sekine M."/>
            <person name="Baba S."/>
            <person name="Ankai A."/>
            <person name="Kosugi H."/>
            <person name="Hosoyama A."/>
            <person name="Fukui S."/>
            <person name="Nagai Y."/>
            <person name="Nishijima K."/>
            <person name="Nakazawa H."/>
            <person name="Takamiya M."/>
            <person name="Masuda S."/>
            <person name="Funahashi T."/>
            <person name="Tanaka T."/>
            <person name="Kudoh Y."/>
            <person name="Yamazaki J."/>
            <person name="Kushida N."/>
            <person name="Oguchi A."/>
            <person name="Aoki K."/>
            <person name="Kubota K."/>
            <person name="Nakamura Y."/>
            <person name="Nomura N."/>
            <person name="Sako Y."/>
            <person name="Kikuchi H."/>
        </authorList>
    </citation>
    <scope>NUCLEOTIDE SEQUENCE [LARGE SCALE GENOMIC DNA]</scope>
    <source>
        <strain>ATCC 700893 / DSM 11879 / JCM 9820 / NBRC 100138 / K1</strain>
    </source>
</reference>